<keyword id="KW-0963">Cytoplasm</keyword>
<keyword id="KW-0342">GTP-binding</keyword>
<keyword id="KW-0378">Hydrolase</keyword>
<keyword id="KW-0460">Magnesium</keyword>
<keyword id="KW-0479">Metal-binding</keyword>
<keyword id="KW-0547">Nucleotide-binding</keyword>
<keyword id="KW-1185">Reference proteome</keyword>
<name>OBG_LACAC</name>
<comment type="function">
    <text evidence="1">An essential GTPase which binds GTP, GDP and possibly (p)ppGpp with moderate affinity, with high nucleotide exchange rates and a fairly low GTP hydrolysis rate. Plays a role in control of the cell cycle, stress response, ribosome biogenesis and in those bacteria that undergo differentiation, in morphogenesis control.</text>
</comment>
<comment type="cofactor">
    <cofactor evidence="1">
        <name>Mg(2+)</name>
        <dbReference type="ChEBI" id="CHEBI:18420"/>
    </cofactor>
</comment>
<comment type="subunit">
    <text evidence="1">Monomer.</text>
</comment>
<comment type="subcellular location">
    <subcellularLocation>
        <location evidence="1">Cytoplasm</location>
    </subcellularLocation>
</comment>
<comment type="similarity">
    <text evidence="1">Belongs to the TRAFAC class OBG-HflX-like GTPase superfamily. OBG GTPase family.</text>
</comment>
<organism>
    <name type="scientific">Lactobacillus acidophilus (strain ATCC 700396 / NCK56 / N2 / NCFM)</name>
    <dbReference type="NCBI Taxonomy" id="272621"/>
    <lineage>
        <taxon>Bacteria</taxon>
        <taxon>Bacillati</taxon>
        <taxon>Bacillota</taxon>
        <taxon>Bacilli</taxon>
        <taxon>Lactobacillales</taxon>
        <taxon>Lactobacillaceae</taxon>
        <taxon>Lactobacillus</taxon>
    </lineage>
</organism>
<evidence type="ECO:0000255" key="1">
    <source>
        <dbReference type="HAMAP-Rule" id="MF_01454"/>
    </source>
</evidence>
<evidence type="ECO:0000255" key="2">
    <source>
        <dbReference type="PROSITE-ProRule" id="PRU01229"/>
    </source>
</evidence>
<evidence type="ECO:0000255" key="3">
    <source>
        <dbReference type="PROSITE-ProRule" id="PRU01231"/>
    </source>
</evidence>
<sequence length="433" mass="47621">MPTFVDQTKIEVQAGKGGDGMVAFRHEKYVPNGGPAGGDGGRGGSIIFVADSGLRTLMDFRYRRKFKADNGENGRIKSQYGRGAKDLYLKVPVGTTVYDFNTGELIGDLVEKGQELVVAKGGRGGRGNIHFATSVNTAPEIAENGEPGEDRVLRLELKLLADVGLVGFPSVGKSTLLSVTTKAKPKIAAYQFTTLTPNLGMVILPDGRDFSMADLPGLIEGASQGVGLGIQFLRHVERTKVILHLVSMDPNNGREAIEDYHTIRQELKSYATDLSDKRELIVASQMDIPGADKKLAQFRKDLEKESNDEPVYAISSVTHAGVSKLMNDTATLVEEVEKERVEEPKVVQKTKEYKYKAPQRNEFMVEKVGEHEFVVKGEQLERLVQMTNLDHQDGIMRLARRLKRLGVDDALREKGAVNGDDVAIGKFVFEFVQ</sequence>
<dbReference type="EC" id="3.6.5.-" evidence="1"/>
<dbReference type="EMBL" id="CP000033">
    <property type="protein sequence ID" value="AAV42799.1"/>
    <property type="molecule type" value="Genomic_DNA"/>
</dbReference>
<dbReference type="RefSeq" id="YP_193830.1">
    <property type="nucleotide sequence ID" value="NC_006814.3"/>
</dbReference>
<dbReference type="SMR" id="Q5FKH5"/>
<dbReference type="STRING" id="272621.LBA0947"/>
<dbReference type="KEGG" id="lac:LBA0947"/>
<dbReference type="PATRIC" id="fig|272621.13.peg.898"/>
<dbReference type="eggNOG" id="COG0536">
    <property type="taxonomic scope" value="Bacteria"/>
</dbReference>
<dbReference type="HOGENOM" id="CLU_011747_2_1_9"/>
<dbReference type="OrthoDB" id="9807318at2"/>
<dbReference type="BioCyc" id="LACI272621:G1G49-949-MONOMER"/>
<dbReference type="Proteomes" id="UP000006381">
    <property type="component" value="Chromosome"/>
</dbReference>
<dbReference type="GO" id="GO:0005737">
    <property type="term" value="C:cytoplasm"/>
    <property type="evidence" value="ECO:0007669"/>
    <property type="project" value="UniProtKB-SubCell"/>
</dbReference>
<dbReference type="GO" id="GO:0005525">
    <property type="term" value="F:GTP binding"/>
    <property type="evidence" value="ECO:0007669"/>
    <property type="project" value="UniProtKB-UniRule"/>
</dbReference>
<dbReference type="GO" id="GO:0003924">
    <property type="term" value="F:GTPase activity"/>
    <property type="evidence" value="ECO:0007669"/>
    <property type="project" value="UniProtKB-UniRule"/>
</dbReference>
<dbReference type="GO" id="GO:0000287">
    <property type="term" value="F:magnesium ion binding"/>
    <property type="evidence" value="ECO:0007669"/>
    <property type="project" value="InterPro"/>
</dbReference>
<dbReference type="GO" id="GO:0042254">
    <property type="term" value="P:ribosome biogenesis"/>
    <property type="evidence" value="ECO:0007669"/>
    <property type="project" value="UniProtKB-UniRule"/>
</dbReference>
<dbReference type="CDD" id="cd01898">
    <property type="entry name" value="Obg"/>
    <property type="match status" value="1"/>
</dbReference>
<dbReference type="FunFam" id="2.70.210.12:FF:000001">
    <property type="entry name" value="GTPase Obg"/>
    <property type="match status" value="1"/>
</dbReference>
<dbReference type="Gene3D" id="3.30.300.350">
    <property type="entry name" value="GTP-binding protein OBG, C-terminal domain"/>
    <property type="match status" value="1"/>
</dbReference>
<dbReference type="Gene3D" id="2.70.210.12">
    <property type="entry name" value="GTP1/OBG domain"/>
    <property type="match status" value="1"/>
</dbReference>
<dbReference type="Gene3D" id="3.40.50.300">
    <property type="entry name" value="P-loop containing nucleotide triphosphate hydrolases"/>
    <property type="match status" value="1"/>
</dbReference>
<dbReference type="HAMAP" id="MF_01454">
    <property type="entry name" value="GTPase_Obg"/>
    <property type="match status" value="1"/>
</dbReference>
<dbReference type="InterPro" id="IPR031167">
    <property type="entry name" value="G_OBG"/>
</dbReference>
<dbReference type="InterPro" id="IPR006073">
    <property type="entry name" value="GTP-bd"/>
</dbReference>
<dbReference type="InterPro" id="IPR014100">
    <property type="entry name" value="GTP-bd_Obg/CgtA"/>
</dbReference>
<dbReference type="InterPro" id="IPR036346">
    <property type="entry name" value="GTP-bd_prot_GTP1/OBG_C_sf"/>
</dbReference>
<dbReference type="InterPro" id="IPR006074">
    <property type="entry name" value="GTP1-OBG_CS"/>
</dbReference>
<dbReference type="InterPro" id="IPR006169">
    <property type="entry name" value="GTP1_OBG_dom"/>
</dbReference>
<dbReference type="InterPro" id="IPR036726">
    <property type="entry name" value="GTP1_OBG_dom_sf"/>
</dbReference>
<dbReference type="InterPro" id="IPR045086">
    <property type="entry name" value="OBG_GTPase"/>
</dbReference>
<dbReference type="InterPro" id="IPR015349">
    <property type="entry name" value="OCT_dom"/>
</dbReference>
<dbReference type="InterPro" id="IPR027417">
    <property type="entry name" value="P-loop_NTPase"/>
</dbReference>
<dbReference type="NCBIfam" id="TIGR02729">
    <property type="entry name" value="Obg_CgtA"/>
    <property type="match status" value="1"/>
</dbReference>
<dbReference type="NCBIfam" id="TIGR03595">
    <property type="entry name" value="Obg_CgtA_exten"/>
    <property type="match status" value="1"/>
</dbReference>
<dbReference type="NCBIfam" id="NF008954">
    <property type="entry name" value="PRK12296.1"/>
    <property type="match status" value="1"/>
</dbReference>
<dbReference type="NCBIfam" id="NF008955">
    <property type="entry name" value="PRK12297.1"/>
    <property type="match status" value="1"/>
</dbReference>
<dbReference type="NCBIfam" id="NF008956">
    <property type="entry name" value="PRK12299.1"/>
    <property type="match status" value="1"/>
</dbReference>
<dbReference type="PANTHER" id="PTHR11702">
    <property type="entry name" value="DEVELOPMENTALLY REGULATED GTP-BINDING PROTEIN-RELATED"/>
    <property type="match status" value="1"/>
</dbReference>
<dbReference type="PANTHER" id="PTHR11702:SF31">
    <property type="entry name" value="MITOCHONDRIAL RIBOSOME-ASSOCIATED GTPASE 2"/>
    <property type="match status" value="1"/>
</dbReference>
<dbReference type="Pfam" id="PF09269">
    <property type="entry name" value="DUF1967"/>
    <property type="match status" value="1"/>
</dbReference>
<dbReference type="Pfam" id="PF01018">
    <property type="entry name" value="GTP1_OBG"/>
    <property type="match status" value="1"/>
</dbReference>
<dbReference type="Pfam" id="PF01926">
    <property type="entry name" value="MMR_HSR1"/>
    <property type="match status" value="1"/>
</dbReference>
<dbReference type="PIRSF" id="PIRSF002401">
    <property type="entry name" value="GTP_bd_Obg/CgtA"/>
    <property type="match status" value="1"/>
</dbReference>
<dbReference type="PRINTS" id="PR00326">
    <property type="entry name" value="GTP1OBG"/>
</dbReference>
<dbReference type="SUPFAM" id="SSF102741">
    <property type="entry name" value="Obg GTP-binding protein C-terminal domain"/>
    <property type="match status" value="1"/>
</dbReference>
<dbReference type="SUPFAM" id="SSF82051">
    <property type="entry name" value="Obg GTP-binding protein N-terminal domain"/>
    <property type="match status" value="1"/>
</dbReference>
<dbReference type="SUPFAM" id="SSF52540">
    <property type="entry name" value="P-loop containing nucleoside triphosphate hydrolases"/>
    <property type="match status" value="1"/>
</dbReference>
<dbReference type="PROSITE" id="PS51710">
    <property type="entry name" value="G_OBG"/>
    <property type="match status" value="1"/>
</dbReference>
<dbReference type="PROSITE" id="PS00905">
    <property type="entry name" value="GTP1_OBG"/>
    <property type="match status" value="1"/>
</dbReference>
<dbReference type="PROSITE" id="PS51883">
    <property type="entry name" value="OBG"/>
    <property type="match status" value="1"/>
</dbReference>
<dbReference type="PROSITE" id="PS51881">
    <property type="entry name" value="OCT"/>
    <property type="match status" value="1"/>
</dbReference>
<accession>Q5FKH5</accession>
<reference key="1">
    <citation type="journal article" date="2005" name="Proc. Natl. Acad. Sci. U.S.A.">
        <title>Complete genome sequence of the probiotic lactic acid bacterium Lactobacillus acidophilus NCFM.</title>
        <authorList>
            <person name="Altermann E."/>
            <person name="Russell W.M."/>
            <person name="Azcarate-Peril M.A."/>
            <person name="Barrangou R."/>
            <person name="Buck B.L."/>
            <person name="McAuliffe O."/>
            <person name="Souther N."/>
            <person name="Dobson A."/>
            <person name="Duong T."/>
            <person name="Callanan M."/>
            <person name="Lick S."/>
            <person name="Hamrick A."/>
            <person name="Cano R."/>
            <person name="Klaenhammer T.R."/>
        </authorList>
    </citation>
    <scope>NUCLEOTIDE SEQUENCE [LARGE SCALE GENOMIC DNA]</scope>
    <source>
        <strain>ATCC 700396 / NCK56 / N2 / NCFM</strain>
    </source>
</reference>
<protein>
    <recommendedName>
        <fullName evidence="1">GTPase Obg</fullName>
        <ecNumber evidence="1">3.6.5.-</ecNumber>
    </recommendedName>
    <alternativeName>
        <fullName evidence="1">GTP-binding protein Obg</fullName>
    </alternativeName>
</protein>
<feature type="chain" id="PRO_0000385989" description="GTPase Obg">
    <location>
        <begin position="1"/>
        <end position="433"/>
    </location>
</feature>
<feature type="domain" description="Obg" evidence="3">
    <location>
        <begin position="2"/>
        <end position="160"/>
    </location>
</feature>
<feature type="domain" description="OBG-type G" evidence="1">
    <location>
        <begin position="161"/>
        <end position="334"/>
    </location>
</feature>
<feature type="domain" description="OCT" evidence="2">
    <location>
        <begin position="355"/>
        <end position="433"/>
    </location>
</feature>
<feature type="binding site" evidence="1">
    <location>
        <begin position="167"/>
        <end position="174"/>
    </location>
    <ligand>
        <name>GTP</name>
        <dbReference type="ChEBI" id="CHEBI:37565"/>
    </ligand>
</feature>
<feature type="binding site" evidence="1">
    <location>
        <position position="174"/>
    </location>
    <ligand>
        <name>Mg(2+)</name>
        <dbReference type="ChEBI" id="CHEBI:18420"/>
    </ligand>
</feature>
<feature type="binding site" evidence="1">
    <location>
        <begin position="192"/>
        <end position="196"/>
    </location>
    <ligand>
        <name>GTP</name>
        <dbReference type="ChEBI" id="CHEBI:37565"/>
    </ligand>
</feature>
<feature type="binding site" evidence="1">
    <location>
        <position position="194"/>
    </location>
    <ligand>
        <name>Mg(2+)</name>
        <dbReference type="ChEBI" id="CHEBI:18420"/>
    </ligand>
</feature>
<feature type="binding site" evidence="1">
    <location>
        <begin position="214"/>
        <end position="217"/>
    </location>
    <ligand>
        <name>GTP</name>
        <dbReference type="ChEBI" id="CHEBI:37565"/>
    </ligand>
</feature>
<feature type="binding site" evidence="1">
    <location>
        <begin position="284"/>
        <end position="287"/>
    </location>
    <ligand>
        <name>GTP</name>
        <dbReference type="ChEBI" id="CHEBI:37565"/>
    </ligand>
</feature>
<feature type="binding site" evidence="1">
    <location>
        <begin position="315"/>
        <end position="317"/>
    </location>
    <ligand>
        <name>GTP</name>
        <dbReference type="ChEBI" id="CHEBI:37565"/>
    </ligand>
</feature>
<proteinExistence type="inferred from homology"/>
<gene>
    <name evidence="1" type="primary">obg</name>
    <name type="ordered locus">LBA0947</name>
</gene>